<gene>
    <name evidence="1" type="primary">rpl14e</name>
    <name type="ordered locus">Igni_1261</name>
</gene>
<protein>
    <recommendedName>
        <fullName evidence="1">Large ribosomal subunit protein eL14</fullName>
    </recommendedName>
    <alternativeName>
        <fullName evidence="2">50S ribosomal protein L14e</fullName>
    </alternativeName>
</protein>
<evidence type="ECO:0000255" key="1">
    <source>
        <dbReference type="HAMAP-Rule" id="MF_00721"/>
    </source>
</evidence>
<evidence type="ECO:0000305" key="2"/>
<dbReference type="EMBL" id="CP000816">
    <property type="protein sequence ID" value="ABU82437.1"/>
    <property type="molecule type" value="Genomic_DNA"/>
</dbReference>
<dbReference type="RefSeq" id="WP_012123401.1">
    <property type="nucleotide sequence ID" value="NC_009776.1"/>
</dbReference>
<dbReference type="SMR" id="A8ABY5"/>
<dbReference type="STRING" id="453591.Igni_1261"/>
<dbReference type="GeneID" id="5562502"/>
<dbReference type="KEGG" id="iho:Igni_1261"/>
<dbReference type="eggNOG" id="arCOG04167">
    <property type="taxonomic scope" value="Archaea"/>
</dbReference>
<dbReference type="HOGENOM" id="CLU_183474_0_0_2"/>
<dbReference type="OrthoDB" id="63594at2157"/>
<dbReference type="PhylomeDB" id="A8ABY5"/>
<dbReference type="Proteomes" id="UP000000262">
    <property type="component" value="Chromosome"/>
</dbReference>
<dbReference type="GO" id="GO:0022625">
    <property type="term" value="C:cytosolic large ribosomal subunit"/>
    <property type="evidence" value="ECO:0007669"/>
    <property type="project" value="TreeGrafter"/>
</dbReference>
<dbReference type="GO" id="GO:0003723">
    <property type="term" value="F:RNA binding"/>
    <property type="evidence" value="ECO:0007669"/>
    <property type="project" value="InterPro"/>
</dbReference>
<dbReference type="GO" id="GO:0003735">
    <property type="term" value="F:structural constituent of ribosome"/>
    <property type="evidence" value="ECO:0007669"/>
    <property type="project" value="InterPro"/>
</dbReference>
<dbReference type="GO" id="GO:0042273">
    <property type="term" value="P:ribosomal large subunit biogenesis"/>
    <property type="evidence" value="ECO:0007669"/>
    <property type="project" value="TreeGrafter"/>
</dbReference>
<dbReference type="GO" id="GO:0006412">
    <property type="term" value="P:translation"/>
    <property type="evidence" value="ECO:0007669"/>
    <property type="project" value="UniProtKB-UniRule"/>
</dbReference>
<dbReference type="CDD" id="cd23702">
    <property type="entry name" value="eL14"/>
    <property type="match status" value="1"/>
</dbReference>
<dbReference type="FunFam" id="2.30.30.30:FF:000045">
    <property type="entry name" value="50S ribosomal protein L14e"/>
    <property type="match status" value="1"/>
</dbReference>
<dbReference type="Gene3D" id="2.30.30.30">
    <property type="match status" value="1"/>
</dbReference>
<dbReference type="HAMAP" id="MF_00721">
    <property type="entry name" value="Ribosomal_eL14"/>
    <property type="match status" value="1"/>
</dbReference>
<dbReference type="InterPro" id="IPR005824">
    <property type="entry name" value="KOW"/>
</dbReference>
<dbReference type="InterPro" id="IPR014722">
    <property type="entry name" value="Rib_uL2_dom2"/>
</dbReference>
<dbReference type="InterPro" id="IPR039660">
    <property type="entry name" value="Ribosomal_eL14"/>
</dbReference>
<dbReference type="InterPro" id="IPR023651">
    <property type="entry name" value="Ribosomal_eL14_arc"/>
</dbReference>
<dbReference type="InterPro" id="IPR008991">
    <property type="entry name" value="Translation_prot_SH3-like_sf"/>
</dbReference>
<dbReference type="NCBIfam" id="NF003320">
    <property type="entry name" value="PRK04333.1"/>
    <property type="match status" value="1"/>
</dbReference>
<dbReference type="PANTHER" id="PTHR11127">
    <property type="entry name" value="60S RIBOSOMAL PROTEIN L14"/>
    <property type="match status" value="1"/>
</dbReference>
<dbReference type="PANTHER" id="PTHR11127:SF2">
    <property type="entry name" value="LARGE RIBOSOMAL SUBUNIT PROTEIN EL14"/>
    <property type="match status" value="1"/>
</dbReference>
<dbReference type="Pfam" id="PF00467">
    <property type="entry name" value="KOW"/>
    <property type="match status" value="1"/>
</dbReference>
<dbReference type="SUPFAM" id="SSF50104">
    <property type="entry name" value="Translation proteins SH3-like domain"/>
    <property type="match status" value="1"/>
</dbReference>
<proteinExistence type="inferred from homology"/>
<comment type="similarity">
    <text evidence="1">Belongs to the eukaryotic ribosomal protein eL14 family.</text>
</comment>
<name>RL14E_IGNH4</name>
<keyword id="KW-1185">Reference proteome</keyword>
<keyword id="KW-0687">Ribonucleoprotein</keyword>
<keyword id="KW-0689">Ribosomal protein</keyword>
<accession>A8ABY5</accession>
<feature type="chain" id="PRO_1000045818" description="Large ribosomal subunit protein eL14">
    <location>
        <begin position="1"/>
        <end position="103"/>
    </location>
</feature>
<organism>
    <name type="scientific">Ignicoccus hospitalis (strain KIN4/I / DSM 18386 / JCM 14125)</name>
    <dbReference type="NCBI Taxonomy" id="453591"/>
    <lineage>
        <taxon>Archaea</taxon>
        <taxon>Thermoproteota</taxon>
        <taxon>Thermoprotei</taxon>
        <taxon>Desulfurococcales</taxon>
        <taxon>Desulfurococcaceae</taxon>
        <taxon>Ignicoccus</taxon>
    </lineage>
</organism>
<sequence length="103" mass="11431">MPAIEVGRVCVIIAGRRAGKKCVIVDLIDDKFVLVTGPKELNGVKRRRMNIKHLEPLDKKVEIEKGADDAKVLEAIRQAGLEEFMKEEVKPELPVPPSLGAYL</sequence>
<reference key="1">
    <citation type="journal article" date="2008" name="Genome Biol.">
        <title>A genomic analysis of the archaeal system Ignicoccus hospitalis-Nanoarchaeum equitans.</title>
        <authorList>
            <person name="Podar M."/>
            <person name="Anderson I."/>
            <person name="Makarova K.S."/>
            <person name="Elkins J.G."/>
            <person name="Ivanova N."/>
            <person name="Wall M.A."/>
            <person name="Lykidis A."/>
            <person name="Mavromatis K."/>
            <person name="Sun H."/>
            <person name="Hudson M.E."/>
            <person name="Chen W."/>
            <person name="Deciu C."/>
            <person name="Hutchison D."/>
            <person name="Eads J.R."/>
            <person name="Anderson A."/>
            <person name="Fernandes F."/>
            <person name="Szeto E."/>
            <person name="Lapidus A."/>
            <person name="Kyrpides N.C."/>
            <person name="Saier M.H. Jr."/>
            <person name="Richardson P.M."/>
            <person name="Rachel R."/>
            <person name="Huber H."/>
            <person name="Eisen J.A."/>
            <person name="Koonin E.V."/>
            <person name="Keller M."/>
            <person name="Stetter K.O."/>
        </authorList>
    </citation>
    <scope>NUCLEOTIDE SEQUENCE [LARGE SCALE GENOMIC DNA]</scope>
    <source>
        <strain>KIN4/I / DSM 18386 / JCM 14125</strain>
    </source>
</reference>